<feature type="chain" id="PRO_1000095923" description="N-(5'-phosphoribosyl)anthranilate isomerase">
    <location>
        <begin position="1"/>
        <end position="213"/>
    </location>
</feature>
<protein>
    <recommendedName>
        <fullName evidence="1">N-(5'-phosphoribosyl)anthranilate isomerase</fullName>
        <shortName evidence="1">PRAI</shortName>
        <ecNumber evidence="1">5.3.1.24</ecNumber>
    </recommendedName>
</protein>
<gene>
    <name evidence="1" type="primary">trpF</name>
    <name type="ordered locus">HCH_02435</name>
</gene>
<proteinExistence type="inferred from homology"/>
<name>TRPF_HAHCH</name>
<keyword id="KW-0028">Amino-acid biosynthesis</keyword>
<keyword id="KW-0057">Aromatic amino acid biosynthesis</keyword>
<keyword id="KW-0413">Isomerase</keyword>
<keyword id="KW-1185">Reference proteome</keyword>
<keyword id="KW-0822">Tryptophan biosynthesis</keyword>
<organism>
    <name type="scientific">Hahella chejuensis (strain KCTC 2396)</name>
    <dbReference type="NCBI Taxonomy" id="349521"/>
    <lineage>
        <taxon>Bacteria</taxon>
        <taxon>Pseudomonadati</taxon>
        <taxon>Pseudomonadota</taxon>
        <taxon>Gammaproteobacteria</taxon>
        <taxon>Oceanospirillales</taxon>
        <taxon>Hahellaceae</taxon>
        <taxon>Hahella</taxon>
    </lineage>
</organism>
<reference key="1">
    <citation type="journal article" date="2005" name="Nucleic Acids Res.">
        <title>Genomic blueprint of Hahella chejuensis, a marine microbe producing an algicidal agent.</title>
        <authorList>
            <person name="Jeong H."/>
            <person name="Yim J.H."/>
            <person name="Lee C."/>
            <person name="Choi S.-H."/>
            <person name="Park Y.K."/>
            <person name="Yoon S.H."/>
            <person name="Hur C.-G."/>
            <person name="Kang H.-Y."/>
            <person name="Kim D."/>
            <person name="Lee H.H."/>
            <person name="Park K.H."/>
            <person name="Park S.-H."/>
            <person name="Park H.-S."/>
            <person name="Lee H.K."/>
            <person name="Oh T.K."/>
            <person name="Kim J.F."/>
        </authorList>
    </citation>
    <scope>NUCLEOTIDE SEQUENCE [LARGE SCALE GENOMIC DNA]</scope>
    <source>
        <strain>KCTC 2396</strain>
    </source>
</reference>
<comment type="catalytic activity">
    <reaction evidence="1">
        <text>N-(5-phospho-beta-D-ribosyl)anthranilate = 1-(2-carboxyphenylamino)-1-deoxy-D-ribulose 5-phosphate</text>
        <dbReference type="Rhea" id="RHEA:21540"/>
        <dbReference type="ChEBI" id="CHEBI:18277"/>
        <dbReference type="ChEBI" id="CHEBI:58613"/>
        <dbReference type="EC" id="5.3.1.24"/>
    </reaction>
</comment>
<comment type="pathway">
    <text evidence="1">Amino-acid biosynthesis; L-tryptophan biosynthesis; L-tryptophan from chorismate: step 3/5.</text>
</comment>
<comment type="similarity">
    <text evidence="1">Belongs to the TrpF family.</text>
</comment>
<dbReference type="EC" id="5.3.1.24" evidence="1"/>
<dbReference type="EMBL" id="CP000155">
    <property type="protein sequence ID" value="ABC29242.1"/>
    <property type="molecule type" value="Genomic_DNA"/>
</dbReference>
<dbReference type="RefSeq" id="WP_011396311.1">
    <property type="nucleotide sequence ID" value="NC_007645.1"/>
</dbReference>
<dbReference type="SMR" id="Q2SJD2"/>
<dbReference type="STRING" id="349521.HCH_02435"/>
<dbReference type="KEGG" id="hch:HCH_02435"/>
<dbReference type="eggNOG" id="COG0135">
    <property type="taxonomic scope" value="Bacteria"/>
</dbReference>
<dbReference type="HOGENOM" id="CLU_076364_2_0_6"/>
<dbReference type="OrthoDB" id="9796196at2"/>
<dbReference type="UniPathway" id="UPA00035">
    <property type="reaction ID" value="UER00042"/>
</dbReference>
<dbReference type="Proteomes" id="UP000000238">
    <property type="component" value="Chromosome"/>
</dbReference>
<dbReference type="GO" id="GO:0004640">
    <property type="term" value="F:phosphoribosylanthranilate isomerase activity"/>
    <property type="evidence" value="ECO:0007669"/>
    <property type="project" value="UniProtKB-UniRule"/>
</dbReference>
<dbReference type="GO" id="GO:0000162">
    <property type="term" value="P:L-tryptophan biosynthetic process"/>
    <property type="evidence" value="ECO:0007669"/>
    <property type="project" value="UniProtKB-UniRule"/>
</dbReference>
<dbReference type="CDD" id="cd00405">
    <property type="entry name" value="PRAI"/>
    <property type="match status" value="1"/>
</dbReference>
<dbReference type="FunFam" id="3.20.20.70:FF:000075">
    <property type="entry name" value="Tryptophan biosynthesis protein TRP1"/>
    <property type="match status" value="1"/>
</dbReference>
<dbReference type="Gene3D" id="3.20.20.70">
    <property type="entry name" value="Aldolase class I"/>
    <property type="match status" value="1"/>
</dbReference>
<dbReference type="HAMAP" id="MF_00135">
    <property type="entry name" value="PRAI"/>
    <property type="match status" value="1"/>
</dbReference>
<dbReference type="InterPro" id="IPR013785">
    <property type="entry name" value="Aldolase_TIM"/>
</dbReference>
<dbReference type="InterPro" id="IPR001240">
    <property type="entry name" value="PRAI_dom"/>
</dbReference>
<dbReference type="InterPro" id="IPR011060">
    <property type="entry name" value="RibuloseP-bd_barrel"/>
</dbReference>
<dbReference type="InterPro" id="IPR044643">
    <property type="entry name" value="TrpF_fam"/>
</dbReference>
<dbReference type="NCBIfam" id="NF002298">
    <property type="entry name" value="PRK01222.1-4"/>
    <property type="match status" value="1"/>
</dbReference>
<dbReference type="PANTHER" id="PTHR42894">
    <property type="entry name" value="N-(5'-PHOSPHORIBOSYL)ANTHRANILATE ISOMERASE"/>
    <property type="match status" value="1"/>
</dbReference>
<dbReference type="PANTHER" id="PTHR42894:SF1">
    <property type="entry name" value="N-(5'-PHOSPHORIBOSYL)ANTHRANILATE ISOMERASE"/>
    <property type="match status" value="1"/>
</dbReference>
<dbReference type="Pfam" id="PF00697">
    <property type="entry name" value="PRAI"/>
    <property type="match status" value="1"/>
</dbReference>
<dbReference type="SUPFAM" id="SSF51366">
    <property type="entry name" value="Ribulose-phoshate binding barrel"/>
    <property type="match status" value="1"/>
</dbReference>
<evidence type="ECO:0000255" key="1">
    <source>
        <dbReference type="HAMAP-Rule" id="MF_00135"/>
    </source>
</evidence>
<accession>Q2SJD2</accession>
<sequence length="213" mass="23313">MTARNKRVRCKICGILELEHALAVSDAGGDAIGFVFYPPSPRYIDPAAASRIIAKLPPFITTVGLFVNHSAEQVREILNVVPLDVLQFHGNEDNDFCRSFSRPFYKAIGVGDETDVVAEAAKYPDAAALLFDTHDPQLRGGTGRVFDWSRIRHELGKPVILAGGLNPTNVAEAIRTVRPYAVDVSGGVEASKGVKSIELIQEFIGEVYREYEV</sequence>